<evidence type="ECO:0000255" key="1">
    <source>
        <dbReference type="HAMAP-Rule" id="MF_00444"/>
    </source>
</evidence>
<keyword id="KW-0963">Cytoplasm</keyword>
<keyword id="KW-0378">Hydrolase</keyword>
<keyword id="KW-0645">Protease</keyword>
<keyword id="KW-1185">Reference proteome</keyword>
<keyword id="KW-0720">Serine protease</keyword>
<organism>
    <name type="scientific">Azoarcus sp. (strain BH72)</name>
    <dbReference type="NCBI Taxonomy" id="418699"/>
    <lineage>
        <taxon>Bacteria</taxon>
        <taxon>Pseudomonadati</taxon>
        <taxon>Pseudomonadota</taxon>
        <taxon>Betaproteobacteria</taxon>
        <taxon>Rhodocyclales</taxon>
        <taxon>Zoogloeaceae</taxon>
        <taxon>Azoarcus</taxon>
    </lineage>
</organism>
<proteinExistence type="inferred from homology"/>
<sequence>MNAGTPQHSSAWDPVGLGLIPMVVEQSGRGERSYDIYSRLLKERVVFLVGPVNDVTANLIVAQLLFLESENPDKDIYFYINSPGGSVTAGLAIYDTMQFIKPNVSTLCIGQAASMGAFLLAAGEKGKRFCLPNSRVMIHQPLGGFQGQASDIEIHAREILYLRERLNGMLAKHTGQTIEQIEKDTDRDNFMSATAAVEYGLVDKVLTSRADT</sequence>
<feature type="chain" id="PRO_1000026063" description="ATP-dependent Clp protease proteolytic subunit">
    <location>
        <begin position="1"/>
        <end position="212"/>
    </location>
</feature>
<feature type="active site" description="Nucleophile" evidence="1">
    <location>
        <position position="114"/>
    </location>
</feature>
<feature type="active site" evidence="1">
    <location>
        <position position="139"/>
    </location>
</feature>
<comment type="function">
    <text evidence="1">Cleaves peptides in various proteins in a process that requires ATP hydrolysis. Has a chymotrypsin-like activity. Plays a major role in the degradation of misfolded proteins.</text>
</comment>
<comment type="catalytic activity">
    <reaction evidence="1">
        <text>Hydrolysis of proteins to small peptides in the presence of ATP and magnesium. alpha-casein is the usual test substrate. In the absence of ATP, only oligopeptides shorter than five residues are hydrolyzed (such as succinyl-Leu-Tyr-|-NHMec, and Leu-Tyr-Leu-|-Tyr-Trp, in which cleavage of the -Tyr-|-Leu- and -Tyr-|-Trp bonds also occurs).</text>
        <dbReference type="EC" id="3.4.21.92"/>
    </reaction>
</comment>
<comment type="subunit">
    <text evidence="1">Fourteen ClpP subunits assemble into 2 heptameric rings which stack back to back to give a disk-like structure with a central cavity, resembling the structure of eukaryotic proteasomes.</text>
</comment>
<comment type="subcellular location">
    <subcellularLocation>
        <location evidence="1">Cytoplasm</location>
    </subcellularLocation>
</comment>
<comment type="similarity">
    <text evidence="1">Belongs to the peptidase S14 family.</text>
</comment>
<protein>
    <recommendedName>
        <fullName evidence="1">ATP-dependent Clp protease proteolytic subunit</fullName>
        <ecNumber evidence="1">3.4.21.92</ecNumber>
    </recommendedName>
    <alternativeName>
        <fullName evidence="1">Endopeptidase Clp</fullName>
    </alternativeName>
</protein>
<accession>A1K783</accession>
<dbReference type="EC" id="3.4.21.92" evidence="1"/>
<dbReference type="EMBL" id="AM406670">
    <property type="protein sequence ID" value="CAL94688.1"/>
    <property type="molecule type" value="Genomic_DNA"/>
</dbReference>
<dbReference type="RefSeq" id="WP_011765802.1">
    <property type="nucleotide sequence ID" value="NC_008702.1"/>
</dbReference>
<dbReference type="SMR" id="A1K783"/>
<dbReference type="STRING" id="62928.azo2071"/>
<dbReference type="MEROPS" id="S14.001"/>
<dbReference type="KEGG" id="aoa:dqs_2200"/>
<dbReference type="KEGG" id="azo:azo2071"/>
<dbReference type="eggNOG" id="COG0740">
    <property type="taxonomic scope" value="Bacteria"/>
</dbReference>
<dbReference type="HOGENOM" id="CLU_058707_3_2_4"/>
<dbReference type="OrthoDB" id="9802800at2"/>
<dbReference type="Proteomes" id="UP000002588">
    <property type="component" value="Chromosome"/>
</dbReference>
<dbReference type="GO" id="GO:0005737">
    <property type="term" value="C:cytoplasm"/>
    <property type="evidence" value="ECO:0007669"/>
    <property type="project" value="UniProtKB-SubCell"/>
</dbReference>
<dbReference type="GO" id="GO:0009368">
    <property type="term" value="C:endopeptidase Clp complex"/>
    <property type="evidence" value="ECO:0007669"/>
    <property type="project" value="TreeGrafter"/>
</dbReference>
<dbReference type="GO" id="GO:0004176">
    <property type="term" value="F:ATP-dependent peptidase activity"/>
    <property type="evidence" value="ECO:0007669"/>
    <property type="project" value="InterPro"/>
</dbReference>
<dbReference type="GO" id="GO:0051117">
    <property type="term" value="F:ATPase binding"/>
    <property type="evidence" value="ECO:0007669"/>
    <property type="project" value="TreeGrafter"/>
</dbReference>
<dbReference type="GO" id="GO:0004252">
    <property type="term" value="F:serine-type endopeptidase activity"/>
    <property type="evidence" value="ECO:0007669"/>
    <property type="project" value="UniProtKB-UniRule"/>
</dbReference>
<dbReference type="GO" id="GO:0006515">
    <property type="term" value="P:protein quality control for misfolded or incompletely synthesized proteins"/>
    <property type="evidence" value="ECO:0007669"/>
    <property type="project" value="TreeGrafter"/>
</dbReference>
<dbReference type="CDD" id="cd07017">
    <property type="entry name" value="S14_ClpP_2"/>
    <property type="match status" value="1"/>
</dbReference>
<dbReference type="FunFam" id="3.90.226.10:FF:000001">
    <property type="entry name" value="ATP-dependent Clp protease proteolytic subunit"/>
    <property type="match status" value="1"/>
</dbReference>
<dbReference type="Gene3D" id="3.90.226.10">
    <property type="entry name" value="2-enoyl-CoA Hydratase, Chain A, domain 1"/>
    <property type="match status" value="1"/>
</dbReference>
<dbReference type="HAMAP" id="MF_00444">
    <property type="entry name" value="ClpP"/>
    <property type="match status" value="1"/>
</dbReference>
<dbReference type="InterPro" id="IPR001907">
    <property type="entry name" value="ClpP"/>
</dbReference>
<dbReference type="InterPro" id="IPR029045">
    <property type="entry name" value="ClpP/crotonase-like_dom_sf"/>
</dbReference>
<dbReference type="InterPro" id="IPR023562">
    <property type="entry name" value="ClpP/TepA"/>
</dbReference>
<dbReference type="InterPro" id="IPR033135">
    <property type="entry name" value="ClpP_His_AS"/>
</dbReference>
<dbReference type="InterPro" id="IPR018215">
    <property type="entry name" value="ClpP_Ser_AS"/>
</dbReference>
<dbReference type="NCBIfam" id="TIGR00493">
    <property type="entry name" value="clpP"/>
    <property type="match status" value="1"/>
</dbReference>
<dbReference type="NCBIfam" id="NF001368">
    <property type="entry name" value="PRK00277.1"/>
    <property type="match status" value="1"/>
</dbReference>
<dbReference type="NCBIfam" id="NF009205">
    <property type="entry name" value="PRK12553.1"/>
    <property type="match status" value="1"/>
</dbReference>
<dbReference type="PANTHER" id="PTHR10381">
    <property type="entry name" value="ATP-DEPENDENT CLP PROTEASE PROTEOLYTIC SUBUNIT"/>
    <property type="match status" value="1"/>
</dbReference>
<dbReference type="PANTHER" id="PTHR10381:SF70">
    <property type="entry name" value="ATP-DEPENDENT CLP PROTEASE PROTEOLYTIC SUBUNIT"/>
    <property type="match status" value="1"/>
</dbReference>
<dbReference type="Pfam" id="PF00574">
    <property type="entry name" value="CLP_protease"/>
    <property type="match status" value="1"/>
</dbReference>
<dbReference type="PRINTS" id="PR00127">
    <property type="entry name" value="CLPPROTEASEP"/>
</dbReference>
<dbReference type="SUPFAM" id="SSF52096">
    <property type="entry name" value="ClpP/crotonase"/>
    <property type="match status" value="1"/>
</dbReference>
<dbReference type="PROSITE" id="PS00382">
    <property type="entry name" value="CLP_PROTEASE_HIS"/>
    <property type="match status" value="1"/>
</dbReference>
<dbReference type="PROSITE" id="PS00381">
    <property type="entry name" value="CLP_PROTEASE_SER"/>
    <property type="match status" value="1"/>
</dbReference>
<reference key="1">
    <citation type="journal article" date="2006" name="Nat. Biotechnol.">
        <title>Complete genome of the mutualistic, N2-fixing grass endophyte Azoarcus sp. strain BH72.</title>
        <authorList>
            <person name="Krause A."/>
            <person name="Ramakumar A."/>
            <person name="Bartels D."/>
            <person name="Battistoni F."/>
            <person name="Bekel T."/>
            <person name="Boch J."/>
            <person name="Boehm M."/>
            <person name="Friedrich F."/>
            <person name="Hurek T."/>
            <person name="Krause L."/>
            <person name="Linke B."/>
            <person name="McHardy A.C."/>
            <person name="Sarkar A."/>
            <person name="Schneiker S."/>
            <person name="Syed A.A."/>
            <person name="Thauer R."/>
            <person name="Vorhoelter F.-J."/>
            <person name="Weidner S."/>
            <person name="Puehler A."/>
            <person name="Reinhold-Hurek B."/>
            <person name="Kaiser O."/>
            <person name="Goesmann A."/>
        </authorList>
    </citation>
    <scope>NUCLEOTIDE SEQUENCE [LARGE SCALE GENOMIC DNA]</scope>
    <source>
        <strain>BH72</strain>
    </source>
</reference>
<gene>
    <name evidence="1" type="primary">clpP</name>
    <name type="ordered locus">azo2071</name>
</gene>
<name>CLPP_AZOSB</name>